<feature type="chain" id="PRO_0000187624" description="Uroporphyrinogen decarboxylase">
    <location>
        <begin position="1"/>
        <end position="352"/>
    </location>
</feature>
<feature type="binding site" evidence="1">
    <location>
        <begin position="26"/>
        <end position="30"/>
    </location>
    <ligand>
        <name>substrate</name>
    </ligand>
</feature>
<feature type="binding site" evidence="1">
    <location>
        <position position="45"/>
    </location>
    <ligand>
        <name>substrate</name>
    </ligand>
</feature>
<feature type="binding site" evidence="1">
    <location>
        <position position="76"/>
    </location>
    <ligand>
        <name>substrate</name>
    </ligand>
</feature>
<feature type="binding site" evidence="1">
    <location>
        <position position="153"/>
    </location>
    <ligand>
        <name>substrate</name>
    </ligand>
</feature>
<feature type="binding site" evidence="1">
    <location>
        <position position="208"/>
    </location>
    <ligand>
        <name>substrate</name>
    </ligand>
</feature>
<feature type="binding site" evidence="1">
    <location>
        <position position="323"/>
    </location>
    <ligand>
        <name>substrate</name>
    </ligand>
</feature>
<feature type="site" description="Transition state stabilizer" evidence="1">
    <location>
        <position position="76"/>
    </location>
</feature>
<protein>
    <recommendedName>
        <fullName evidence="1">Uroporphyrinogen decarboxylase</fullName>
        <shortName evidence="1">UPD</shortName>
        <shortName evidence="1">URO-D</shortName>
        <ecNumber evidence="1">4.1.1.37</ecNumber>
    </recommendedName>
</protein>
<evidence type="ECO:0000255" key="1">
    <source>
        <dbReference type="HAMAP-Rule" id="MF_00218"/>
    </source>
</evidence>
<proteinExistence type="inferred from homology"/>
<accession>Q7V8B4</accession>
<dbReference type="EC" id="4.1.1.37" evidence="1"/>
<dbReference type="EMBL" id="BX548175">
    <property type="protein sequence ID" value="CAE20620.1"/>
    <property type="molecule type" value="Genomic_DNA"/>
</dbReference>
<dbReference type="RefSeq" id="WP_011129824.1">
    <property type="nucleotide sequence ID" value="NC_005071.1"/>
</dbReference>
<dbReference type="SMR" id="Q7V8B4"/>
<dbReference type="KEGG" id="pmt:PMT_0445"/>
<dbReference type="eggNOG" id="COG0407">
    <property type="taxonomic scope" value="Bacteria"/>
</dbReference>
<dbReference type="HOGENOM" id="CLU_040933_0_2_3"/>
<dbReference type="OrthoDB" id="9806656at2"/>
<dbReference type="UniPathway" id="UPA00251">
    <property type="reaction ID" value="UER00321"/>
</dbReference>
<dbReference type="Proteomes" id="UP000001423">
    <property type="component" value="Chromosome"/>
</dbReference>
<dbReference type="GO" id="GO:0005737">
    <property type="term" value="C:cytoplasm"/>
    <property type="evidence" value="ECO:0007669"/>
    <property type="project" value="UniProtKB-SubCell"/>
</dbReference>
<dbReference type="GO" id="GO:0004853">
    <property type="term" value="F:uroporphyrinogen decarboxylase activity"/>
    <property type="evidence" value="ECO:0007669"/>
    <property type="project" value="UniProtKB-UniRule"/>
</dbReference>
<dbReference type="GO" id="GO:0006782">
    <property type="term" value="P:protoporphyrinogen IX biosynthetic process"/>
    <property type="evidence" value="ECO:0007669"/>
    <property type="project" value="UniProtKB-UniRule"/>
</dbReference>
<dbReference type="CDD" id="cd00717">
    <property type="entry name" value="URO-D"/>
    <property type="match status" value="1"/>
</dbReference>
<dbReference type="FunFam" id="3.20.20.210:FF:000006">
    <property type="entry name" value="Uroporphyrinogen decarboxylase"/>
    <property type="match status" value="1"/>
</dbReference>
<dbReference type="Gene3D" id="3.20.20.210">
    <property type="match status" value="1"/>
</dbReference>
<dbReference type="HAMAP" id="MF_00218">
    <property type="entry name" value="URO_D"/>
    <property type="match status" value="1"/>
</dbReference>
<dbReference type="InterPro" id="IPR038071">
    <property type="entry name" value="UROD/MetE-like_sf"/>
</dbReference>
<dbReference type="InterPro" id="IPR006361">
    <property type="entry name" value="Uroporphyrinogen_deCO2ase_HemE"/>
</dbReference>
<dbReference type="InterPro" id="IPR000257">
    <property type="entry name" value="Uroporphyrinogen_deCOase"/>
</dbReference>
<dbReference type="NCBIfam" id="TIGR01464">
    <property type="entry name" value="hemE"/>
    <property type="match status" value="1"/>
</dbReference>
<dbReference type="PANTHER" id="PTHR21091">
    <property type="entry name" value="METHYLTETRAHYDROFOLATE:HOMOCYSTEINE METHYLTRANSFERASE RELATED"/>
    <property type="match status" value="1"/>
</dbReference>
<dbReference type="PANTHER" id="PTHR21091:SF169">
    <property type="entry name" value="UROPORPHYRINOGEN DECARBOXYLASE"/>
    <property type="match status" value="1"/>
</dbReference>
<dbReference type="Pfam" id="PF01208">
    <property type="entry name" value="URO-D"/>
    <property type="match status" value="1"/>
</dbReference>
<dbReference type="SUPFAM" id="SSF51726">
    <property type="entry name" value="UROD/MetE-like"/>
    <property type="match status" value="1"/>
</dbReference>
<dbReference type="PROSITE" id="PS00906">
    <property type="entry name" value="UROD_1"/>
    <property type="match status" value="1"/>
</dbReference>
<dbReference type="PROSITE" id="PS00907">
    <property type="entry name" value="UROD_2"/>
    <property type="match status" value="1"/>
</dbReference>
<comment type="function">
    <text evidence="1">Catalyzes the decarboxylation of four acetate groups of uroporphyrinogen-III to yield coproporphyrinogen-III.</text>
</comment>
<comment type="catalytic activity">
    <reaction evidence="1">
        <text>uroporphyrinogen III + 4 H(+) = coproporphyrinogen III + 4 CO2</text>
        <dbReference type="Rhea" id="RHEA:19865"/>
        <dbReference type="ChEBI" id="CHEBI:15378"/>
        <dbReference type="ChEBI" id="CHEBI:16526"/>
        <dbReference type="ChEBI" id="CHEBI:57308"/>
        <dbReference type="ChEBI" id="CHEBI:57309"/>
        <dbReference type="EC" id="4.1.1.37"/>
    </reaction>
</comment>
<comment type="pathway">
    <text evidence="1">Porphyrin-containing compound metabolism; protoporphyrin-IX biosynthesis; coproporphyrinogen-III from 5-aminolevulinate: step 4/4.</text>
</comment>
<comment type="subunit">
    <text evidence="1">Homodimer.</text>
</comment>
<comment type="subcellular location">
    <subcellularLocation>
        <location evidence="1">Cytoplasm</location>
    </subcellularLocation>
</comment>
<comment type="similarity">
    <text evidence="1">Belongs to the uroporphyrinogen decarboxylase family.</text>
</comment>
<keyword id="KW-0963">Cytoplasm</keyword>
<keyword id="KW-0210">Decarboxylase</keyword>
<keyword id="KW-0456">Lyase</keyword>
<keyword id="KW-0627">Porphyrin biosynthesis</keyword>
<keyword id="KW-1185">Reference proteome</keyword>
<name>DCUP_PROMM</name>
<organism>
    <name type="scientific">Prochlorococcus marinus (strain MIT 9313)</name>
    <dbReference type="NCBI Taxonomy" id="74547"/>
    <lineage>
        <taxon>Bacteria</taxon>
        <taxon>Bacillati</taxon>
        <taxon>Cyanobacteriota</taxon>
        <taxon>Cyanophyceae</taxon>
        <taxon>Synechococcales</taxon>
        <taxon>Prochlorococcaceae</taxon>
        <taxon>Prochlorococcus</taxon>
    </lineage>
</organism>
<gene>
    <name evidence="1" type="primary">hemE</name>
    <name type="ordered locus">PMT_0445</name>
</gene>
<sequence>MSDSQPLLLRAARGESVERTPVWMMRQAGRYMKVYRDLRDRYPSFRERSENPDLSYQISMQPFEAFQPDGVILFSDILTPLPGMGIDFDIVESKGPLIQKPIRSLSQIEALQPLEPNATMPFVGEVLGRLRESVGNKAAVLGFVGAPWTLAAYVVEGKSSKNYAVIKAMAFQQPDLLHRLLNHFAESIATYLRYQIDSGAQVVQMFDSWAGQLSPADYDTFAAPYQKRVVDLVKSTHPDTPMILYISGSAGVLERMGRTGVDIISLDWTVDMADGCARLPEHLGVQGNVDPGLLFGTPEAIRERIVDAVRKARGRRHILNLGHGILPGTPEDNAKVFFETGKTVDNLIGSAA</sequence>
<reference key="1">
    <citation type="journal article" date="2003" name="Nature">
        <title>Genome divergence in two Prochlorococcus ecotypes reflects oceanic niche differentiation.</title>
        <authorList>
            <person name="Rocap G."/>
            <person name="Larimer F.W."/>
            <person name="Lamerdin J.E."/>
            <person name="Malfatti S."/>
            <person name="Chain P."/>
            <person name="Ahlgren N.A."/>
            <person name="Arellano A."/>
            <person name="Coleman M."/>
            <person name="Hauser L."/>
            <person name="Hess W.R."/>
            <person name="Johnson Z.I."/>
            <person name="Land M.L."/>
            <person name="Lindell D."/>
            <person name="Post A.F."/>
            <person name="Regala W."/>
            <person name="Shah M."/>
            <person name="Shaw S.L."/>
            <person name="Steglich C."/>
            <person name="Sullivan M.B."/>
            <person name="Ting C.S."/>
            <person name="Tolonen A."/>
            <person name="Webb E.A."/>
            <person name="Zinser E.R."/>
            <person name="Chisholm S.W."/>
        </authorList>
    </citation>
    <scope>NUCLEOTIDE SEQUENCE [LARGE SCALE GENOMIC DNA]</scope>
    <source>
        <strain>MIT 9313</strain>
    </source>
</reference>